<keyword id="KW-0963">Cytoplasm</keyword>
<keyword id="KW-0396">Initiation factor</keyword>
<keyword id="KW-0597">Phosphoprotein</keyword>
<keyword id="KW-0648">Protein biosynthesis</keyword>
<keyword id="KW-0652">Protein synthesis inhibitor</keyword>
<keyword id="KW-1185">Reference proteome</keyword>
<keyword id="KW-0810">Translation regulation</keyword>
<dbReference type="EMBL" id="DS480479">
    <property type="protein sequence ID" value="EDO15131.1"/>
    <property type="molecule type" value="Genomic_DNA"/>
</dbReference>
<dbReference type="RefSeq" id="XP_001642989.1">
    <property type="nucleotide sequence ID" value="XM_001642939.1"/>
</dbReference>
<dbReference type="SMR" id="A7TRH1"/>
<dbReference type="FunCoup" id="A7TRH1">
    <property type="interactions" value="395"/>
</dbReference>
<dbReference type="STRING" id="436907.A7TRH1"/>
<dbReference type="GeneID" id="5543191"/>
<dbReference type="KEGG" id="vpo:Kpol_413p6"/>
<dbReference type="eggNOG" id="ENOG502S2E7">
    <property type="taxonomic scope" value="Eukaryota"/>
</dbReference>
<dbReference type="HOGENOM" id="CLU_128343_0_0_1"/>
<dbReference type="InParanoid" id="A7TRH1"/>
<dbReference type="OMA" id="GRPKVKH"/>
<dbReference type="OrthoDB" id="3995390at2759"/>
<dbReference type="PhylomeDB" id="A7TRH1"/>
<dbReference type="Proteomes" id="UP000000267">
    <property type="component" value="Unassembled WGS sequence"/>
</dbReference>
<dbReference type="GO" id="GO:0005737">
    <property type="term" value="C:cytoplasm"/>
    <property type="evidence" value="ECO:0007669"/>
    <property type="project" value="UniProtKB-SubCell"/>
</dbReference>
<dbReference type="GO" id="GO:0008190">
    <property type="term" value="F:eukaryotic initiation factor 4E binding"/>
    <property type="evidence" value="ECO:0007669"/>
    <property type="project" value="EnsemblFungi"/>
</dbReference>
<dbReference type="GO" id="GO:0003743">
    <property type="term" value="F:translation initiation factor activity"/>
    <property type="evidence" value="ECO:0007669"/>
    <property type="project" value="UniProtKB-KW"/>
</dbReference>
<dbReference type="GO" id="GO:0030447">
    <property type="term" value="P:filamentous growth"/>
    <property type="evidence" value="ECO:0007669"/>
    <property type="project" value="EnsemblFungi"/>
</dbReference>
<dbReference type="GO" id="GO:0017148">
    <property type="term" value="P:negative regulation of translation"/>
    <property type="evidence" value="ECO:0007669"/>
    <property type="project" value="UniProtKB-KW"/>
</dbReference>
<dbReference type="GO" id="GO:0010606">
    <property type="term" value="P:positive regulation of cytoplasmic mRNA processing body assembly"/>
    <property type="evidence" value="ECO:0007669"/>
    <property type="project" value="EnsemblFungi"/>
</dbReference>
<dbReference type="GO" id="GO:0045727">
    <property type="term" value="P:positive regulation of translation"/>
    <property type="evidence" value="ECO:0007669"/>
    <property type="project" value="EnsemblFungi"/>
</dbReference>
<dbReference type="InterPro" id="IPR031456">
    <property type="entry name" value="Caf20"/>
</dbReference>
<dbReference type="Pfam" id="PF17052">
    <property type="entry name" value="CAF20"/>
    <property type="match status" value="1"/>
</dbReference>
<gene>
    <name type="primary">CAF20</name>
    <name type="ORF">Kpol_413p6</name>
</gene>
<proteinExistence type="inferred from homology"/>
<comment type="function">
    <text evidence="1">Acts as an inhibitor of cap-dependent translation. Competes with eIF4G1 and EAP1 for binding to eIF4E and interferes with the formation of the eIF4F complex, inhibiting translation and stabilizing mRNA (By similarity).</text>
</comment>
<comment type="subcellular location">
    <subcellularLocation>
        <location evidence="1">Cytoplasm</location>
    </subcellularLocation>
</comment>
<comment type="similarity">
    <text evidence="3">Belongs to the CAF20 family.</text>
</comment>
<organism>
    <name type="scientific">Vanderwaltozyma polyspora (strain ATCC 22028 / DSM 70294 / BCRC 21397 / CBS 2163 / NBRC 10782 / NRRL Y-8283 / UCD 57-17)</name>
    <name type="common">Kluyveromyces polysporus</name>
    <dbReference type="NCBI Taxonomy" id="436907"/>
    <lineage>
        <taxon>Eukaryota</taxon>
        <taxon>Fungi</taxon>
        <taxon>Dikarya</taxon>
        <taxon>Ascomycota</taxon>
        <taxon>Saccharomycotina</taxon>
        <taxon>Saccharomycetes</taxon>
        <taxon>Saccharomycetales</taxon>
        <taxon>Saccharomycetaceae</taxon>
        <taxon>Vanderwaltozyma</taxon>
    </lineage>
</organism>
<protein>
    <recommendedName>
        <fullName>Cap-associated protein CAF20</fullName>
    </recommendedName>
</protein>
<evidence type="ECO:0000250" key="1"/>
<evidence type="ECO:0000256" key="2">
    <source>
        <dbReference type="SAM" id="MobiDB-lite"/>
    </source>
</evidence>
<evidence type="ECO:0000305" key="3"/>
<sequence>MVRYTVDELFHLKPTESLPVQFDAEEFKAIIEKVKQIQALKEEEFNAHGGHFNRRRSSHHHHGRPKVKHTKPKVTTDSDGWSTFEAANKKVNEDEESENVSVAVVPETLKVKPNNKNISSSRPADNKDIIADKQTHSFNAFAALESDEEEET</sequence>
<accession>A7TRH1</accession>
<reference key="1">
    <citation type="journal article" date="2007" name="Proc. Natl. Acad. Sci. U.S.A.">
        <title>Independent sorting-out of thousands of duplicated gene pairs in two yeast species descended from a whole-genome duplication.</title>
        <authorList>
            <person name="Scannell D.R."/>
            <person name="Frank A.C."/>
            <person name="Conant G.C."/>
            <person name="Byrne K.P."/>
            <person name="Woolfit M."/>
            <person name="Wolfe K.H."/>
        </authorList>
    </citation>
    <scope>NUCLEOTIDE SEQUENCE [LARGE SCALE GENOMIC DNA]</scope>
    <source>
        <strain>ATCC 22028 / DSM 70294 / BCRC 21397 / CBS 2163 / NBRC 10782 / NRRL Y-8283 / UCD 57-17</strain>
    </source>
</reference>
<name>CAF20_VANPO</name>
<feature type="chain" id="PRO_0000330091" description="Cap-associated protein CAF20">
    <location>
        <begin position="1"/>
        <end position="152"/>
    </location>
</feature>
<feature type="region of interest" description="Disordered" evidence="2">
    <location>
        <begin position="46"/>
        <end position="133"/>
    </location>
</feature>
<feature type="compositionally biased region" description="Basic residues" evidence="2">
    <location>
        <begin position="51"/>
        <end position="72"/>
    </location>
</feature>
<feature type="compositionally biased region" description="Polar residues" evidence="2">
    <location>
        <begin position="114"/>
        <end position="123"/>
    </location>
</feature>
<feature type="compositionally biased region" description="Basic and acidic residues" evidence="2">
    <location>
        <begin position="124"/>
        <end position="133"/>
    </location>
</feature>